<evidence type="ECO:0000255" key="1">
    <source>
        <dbReference type="HAMAP-Rule" id="MF_01307"/>
    </source>
</evidence>
<evidence type="ECO:0000305" key="2"/>
<reference key="1">
    <citation type="journal article" date="2001" name="Proc. Natl. Acad. Sci. U.S.A.">
        <title>Complete genomic sequence of Pasteurella multocida Pm70.</title>
        <authorList>
            <person name="May B.J."/>
            <person name="Zhang Q."/>
            <person name="Li L.L."/>
            <person name="Paustian M.L."/>
            <person name="Whittam T.S."/>
            <person name="Kapur V."/>
        </authorList>
    </citation>
    <scope>NUCLEOTIDE SEQUENCE [LARGE SCALE GENOMIC DNA]</scope>
    <source>
        <strain>Pm70</strain>
    </source>
</reference>
<feature type="chain" id="PRO_0000131566" description="Small ribosomal subunit protein uS5">
    <location>
        <begin position="1"/>
        <end position="166"/>
    </location>
</feature>
<feature type="domain" description="S5 DRBM" evidence="1">
    <location>
        <begin position="11"/>
        <end position="74"/>
    </location>
</feature>
<protein>
    <recommendedName>
        <fullName evidence="1">Small ribosomal subunit protein uS5</fullName>
    </recommendedName>
    <alternativeName>
        <fullName evidence="2">30S ribosomal protein S5</fullName>
    </alternativeName>
</protein>
<sequence length="166" mass="17442">MANIEKQAGELQEKLIAVNRVSKTVKGGRIMSFTALTVVGDGNGRVGFGYGKAREVPAAIQKAMEKARRNMINVALNEGTLQHPIKGAHTGSRVFMQPASEGTGIIAGGAMRAVLEVAGVRNVLSKAYGSTNPINVVRATIDALANMKSPEMVAAKRGKTVDEILG</sequence>
<organism>
    <name type="scientific">Pasteurella multocida (strain Pm70)</name>
    <dbReference type="NCBI Taxonomy" id="272843"/>
    <lineage>
        <taxon>Bacteria</taxon>
        <taxon>Pseudomonadati</taxon>
        <taxon>Pseudomonadota</taxon>
        <taxon>Gammaproteobacteria</taxon>
        <taxon>Pasteurellales</taxon>
        <taxon>Pasteurellaceae</taxon>
        <taxon>Pasteurella</taxon>
    </lineage>
</organism>
<accession>Q9CL47</accession>
<keyword id="KW-1185">Reference proteome</keyword>
<keyword id="KW-0687">Ribonucleoprotein</keyword>
<keyword id="KW-0689">Ribosomal protein</keyword>
<keyword id="KW-0694">RNA-binding</keyword>
<keyword id="KW-0699">rRNA-binding</keyword>
<dbReference type="EMBL" id="AE004439">
    <property type="protein sequence ID" value="AAK03482.1"/>
    <property type="molecule type" value="Genomic_DNA"/>
</dbReference>
<dbReference type="RefSeq" id="WP_005717915.1">
    <property type="nucleotide sequence ID" value="NC_002663.1"/>
</dbReference>
<dbReference type="SMR" id="Q9CL47"/>
<dbReference type="STRING" id="272843.PM1398"/>
<dbReference type="EnsemblBacteria" id="AAK03482">
    <property type="protein sequence ID" value="AAK03482"/>
    <property type="gene ID" value="PM1398"/>
</dbReference>
<dbReference type="GeneID" id="77207043"/>
<dbReference type="KEGG" id="pmu:PM1398"/>
<dbReference type="HOGENOM" id="CLU_065898_2_2_6"/>
<dbReference type="OrthoDB" id="9809045at2"/>
<dbReference type="Proteomes" id="UP000000809">
    <property type="component" value="Chromosome"/>
</dbReference>
<dbReference type="GO" id="GO:0015935">
    <property type="term" value="C:small ribosomal subunit"/>
    <property type="evidence" value="ECO:0007669"/>
    <property type="project" value="InterPro"/>
</dbReference>
<dbReference type="GO" id="GO:0019843">
    <property type="term" value="F:rRNA binding"/>
    <property type="evidence" value="ECO:0007669"/>
    <property type="project" value="UniProtKB-UniRule"/>
</dbReference>
<dbReference type="GO" id="GO:0003735">
    <property type="term" value="F:structural constituent of ribosome"/>
    <property type="evidence" value="ECO:0007669"/>
    <property type="project" value="InterPro"/>
</dbReference>
<dbReference type="GO" id="GO:0006412">
    <property type="term" value="P:translation"/>
    <property type="evidence" value="ECO:0007669"/>
    <property type="project" value="UniProtKB-UniRule"/>
</dbReference>
<dbReference type="FunFam" id="3.30.160.20:FF:000001">
    <property type="entry name" value="30S ribosomal protein S5"/>
    <property type="match status" value="1"/>
</dbReference>
<dbReference type="FunFam" id="3.30.230.10:FF:000002">
    <property type="entry name" value="30S ribosomal protein S5"/>
    <property type="match status" value="1"/>
</dbReference>
<dbReference type="Gene3D" id="3.30.160.20">
    <property type="match status" value="1"/>
</dbReference>
<dbReference type="Gene3D" id="3.30.230.10">
    <property type="match status" value="1"/>
</dbReference>
<dbReference type="HAMAP" id="MF_01307_B">
    <property type="entry name" value="Ribosomal_uS5_B"/>
    <property type="match status" value="1"/>
</dbReference>
<dbReference type="InterPro" id="IPR020568">
    <property type="entry name" value="Ribosomal_Su5_D2-typ_SF"/>
</dbReference>
<dbReference type="InterPro" id="IPR000851">
    <property type="entry name" value="Ribosomal_uS5"/>
</dbReference>
<dbReference type="InterPro" id="IPR005712">
    <property type="entry name" value="Ribosomal_uS5_bac-type"/>
</dbReference>
<dbReference type="InterPro" id="IPR005324">
    <property type="entry name" value="Ribosomal_uS5_C"/>
</dbReference>
<dbReference type="InterPro" id="IPR013810">
    <property type="entry name" value="Ribosomal_uS5_N"/>
</dbReference>
<dbReference type="InterPro" id="IPR018192">
    <property type="entry name" value="Ribosomal_uS5_N_CS"/>
</dbReference>
<dbReference type="InterPro" id="IPR014721">
    <property type="entry name" value="Ribsml_uS5_D2-typ_fold_subgr"/>
</dbReference>
<dbReference type="NCBIfam" id="TIGR01021">
    <property type="entry name" value="rpsE_bact"/>
    <property type="match status" value="1"/>
</dbReference>
<dbReference type="PANTHER" id="PTHR48277">
    <property type="entry name" value="MITOCHONDRIAL RIBOSOMAL PROTEIN S5"/>
    <property type="match status" value="1"/>
</dbReference>
<dbReference type="PANTHER" id="PTHR48277:SF1">
    <property type="entry name" value="MITOCHONDRIAL RIBOSOMAL PROTEIN S5"/>
    <property type="match status" value="1"/>
</dbReference>
<dbReference type="Pfam" id="PF00333">
    <property type="entry name" value="Ribosomal_S5"/>
    <property type="match status" value="1"/>
</dbReference>
<dbReference type="Pfam" id="PF03719">
    <property type="entry name" value="Ribosomal_S5_C"/>
    <property type="match status" value="1"/>
</dbReference>
<dbReference type="SUPFAM" id="SSF54768">
    <property type="entry name" value="dsRNA-binding domain-like"/>
    <property type="match status" value="1"/>
</dbReference>
<dbReference type="SUPFAM" id="SSF54211">
    <property type="entry name" value="Ribosomal protein S5 domain 2-like"/>
    <property type="match status" value="1"/>
</dbReference>
<dbReference type="PROSITE" id="PS00585">
    <property type="entry name" value="RIBOSOMAL_S5"/>
    <property type="match status" value="1"/>
</dbReference>
<dbReference type="PROSITE" id="PS50881">
    <property type="entry name" value="S5_DSRBD"/>
    <property type="match status" value="1"/>
</dbReference>
<proteinExistence type="inferred from homology"/>
<comment type="function">
    <text evidence="1">With S4 and S12 plays an important role in translational accuracy.</text>
</comment>
<comment type="function">
    <text evidence="1">Located at the back of the 30S subunit body where it stabilizes the conformation of the head with respect to the body.</text>
</comment>
<comment type="subunit">
    <text evidence="1">Part of the 30S ribosomal subunit. Contacts proteins S4 and S8.</text>
</comment>
<comment type="domain">
    <text>The N-terminal domain interacts with the head of the 30S subunit; the C-terminal domain interacts with the body and contacts protein S4. The interaction surface between S4 and S5 is involved in control of translational fidelity.</text>
</comment>
<comment type="similarity">
    <text evidence="1">Belongs to the universal ribosomal protein uS5 family.</text>
</comment>
<name>RS5_PASMU</name>
<gene>
    <name evidence="1" type="primary">rpsE</name>
    <name evidence="1" type="synonym">rps5</name>
    <name type="ordered locus">PM1398</name>
</gene>